<feature type="chain" id="PRO_0000441084" description="Aurofusarin biosynthesis regulatory protein aurR1">
    <location>
        <begin position="1"/>
        <end position="398"/>
    </location>
</feature>
<feature type="DNA-binding region" description="Zn(2)-C6 fungal-type" evidence="1">
    <location>
        <begin position="18"/>
        <end position="45"/>
    </location>
</feature>
<feature type="region of interest" description="Disordered" evidence="2">
    <location>
        <begin position="52"/>
        <end position="73"/>
    </location>
</feature>
<feature type="region of interest" description="Disordered" evidence="2">
    <location>
        <begin position="275"/>
        <end position="314"/>
    </location>
</feature>
<feature type="compositionally biased region" description="Basic and acidic residues" evidence="2">
    <location>
        <begin position="56"/>
        <end position="67"/>
    </location>
</feature>
<feature type="compositionally biased region" description="Basic and acidic residues" evidence="2">
    <location>
        <begin position="289"/>
        <end position="298"/>
    </location>
</feature>
<feature type="compositionally biased region" description="Polar residues" evidence="2">
    <location>
        <begin position="299"/>
        <end position="311"/>
    </location>
</feature>
<gene>
    <name evidence="8" type="primary">aurR1</name>
    <name evidence="7" type="synonym">GIP2</name>
    <name type="ORF">FG02320</name>
    <name type="ORF">FGRAMPH1_01T05585</name>
</gene>
<reference key="1">
    <citation type="journal article" date="2007" name="Science">
        <title>The Fusarium graminearum genome reveals a link between localized polymorphism and pathogen specialization.</title>
        <authorList>
            <person name="Cuomo C.A."/>
            <person name="Gueldener U."/>
            <person name="Xu J.-R."/>
            <person name="Trail F."/>
            <person name="Turgeon B.G."/>
            <person name="Di Pietro A."/>
            <person name="Walton J.D."/>
            <person name="Ma L.-J."/>
            <person name="Baker S.E."/>
            <person name="Rep M."/>
            <person name="Adam G."/>
            <person name="Antoniw J."/>
            <person name="Baldwin T."/>
            <person name="Calvo S.E."/>
            <person name="Chang Y.-L."/>
            <person name="DeCaprio D."/>
            <person name="Gale L.R."/>
            <person name="Gnerre S."/>
            <person name="Goswami R.S."/>
            <person name="Hammond-Kosack K."/>
            <person name="Harris L.J."/>
            <person name="Hilburn K."/>
            <person name="Kennell J.C."/>
            <person name="Kroken S."/>
            <person name="Magnuson J.K."/>
            <person name="Mannhaupt G."/>
            <person name="Mauceli E.W."/>
            <person name="Mewes H.-W."/>
            <person name="Mitterbauer R."/>
            <person name="Muehlbauer G."/>
            <person name="Muensterkoetter M."/>
            <person name="Nelson D."/>
            <person name="O'Donnell K."/>
            <person name="Ouellet T."/>
            <person name="Qi W."/>
            <person name="Quesneville H."/>
            <person name="Roncero M.I.G."/>
            <person name="Seong K.-Y."/>
            <person name="Tetko I.V."/>
            <person name="Urban M."/>
            <person name="Waalwijk C."/>
            <person name="Ward T.J."/>
            <person name="Yao J."/>
            <person name="Birren B.W."/>
            <person name="Kistler H.C."/>
        </authorList>
    </citation>
    <scope>NUCLEOTIDE SEQUENCE [LARGE SCALE GENOMIC DNA]</scope>
    <source>
        <strain>ATCC MYA-4620 / CBS 123657 / FGSC 9075 / NRRL 31084 / PH-1</strain>
    </source>
</reference>
<reference key="2">
    <citation type="journal article" date="2010" name="Nature">
        <title>Comparative genomics reveals mobile pathogenicity chromosomes in Fusarium.</title>
        <authorList>
            <person name="Ma L.-J."/>
            <person name="van der Does H.C."/>
            <person name="Borkovich K.A."/>
            <person name="Coleman J.J."/>
            <person name="Daboussi M.-J."/>
            <person name="Di Pietro A."/>
            <person name="Dufresne M."/>
            <person name="Freitag M."/>
            <person name="Grabherr M."/>
            <person name="Henrissat B."/>
            <person name="Houterman P.M."/>
            <person name="Kang S."/>
            <person name="Shim W.-B."/>
            <person name="Woloshuk C."/>
            <person name="Xie X."/>
            <person name="Xu J.-R."/>
            <person name="Antoniw J."/>
            <person name="Baker S.E."/>
            <person name="Bluhm B.H."/>
            <person name="Breakspear A."/>
            <person name="Brown D.W."/>
            <person name="Butchko R.A.E."/>
            <person name="Chapman S."/>
            <person name="Coulson R."/>
            <person name="Coutinho P.M."/>
            <person name="Danchin E.G.J."/>
            <person name="Diener A."/>
            <person name="Gale L.R."/>
            <person name="Gardiner D.M."/>
            <person name="Goff S."/>
            <person name="Hammond-Kosack K.E."/>
            <person name="Hilburn K."/>
            <person name="Hua-Van A."/>
            <person name="Jonkers W."/>
            <person name="Kazan K."/>
            <person name="Kodira C.D."/>
            <person name="Koehrsen M."/>
            <person name="Kumar L."/>
            <person name="Lee Y.-H."/>
            <person name="Li L."/>
            <person name="Manners J.M."/>
            <person name="Miranda-Saavedra D."/>
            <person name="Mukherjee M."/>
            <person name="Park G."/>
            <person name="Park J."/>
            <person name="Park S.-Y."/>
            <person name="Proctor R.H."/>
            <person name="Regev A."/>
            <person name="Ruiz-Roldan M.C."/>
            <person name="Sain D."/>
            <person name="Sakthikumar S."/>
            <person name="Sykes S."/>
            <person name="Schwartz D.C."/>
            <person name="Turgeon B.G."/>
            <person name="Wapinski I."/>
            <person name="Yoder O."/>
            <person name="Young S."/>
            <person name="Zeng Q."/>
            <person name="Zhou S."/>
            <person name="Galagan J."/>
            <person name="Cuomo C.A."/>
            <person name="Kistler H.C."/>
            <person name="Rep M."/>
        </authorList>
    </citation>
    <scope>GENOME REANNOTATION</scope>
    <source>
        <strain>ATCC MYA-4620 / CBS 123657 / FGSC 9075 / NRRL 31084 / PH-1</strain>
    </source>
</reference>
<reference key="3">
    <citation type="journal article" date="2015" name="BMC Genomics">
        <title>The completed genome sequence of the pathogenic ascomycete fungus Fusarium graminearum.</title>
        <authorList>
            <person name="King R."/>
            <person name="Urban M."/>
            <person name="Hammond-Kosack M.C.U."/>
            <person name="Hassani-Pak K."/>
            <person name="Hammond-Kosack K.E."/>
        </authorList>
    </citation>
    <scope>NUCLEOTIDE SEQUENCE [LARGE SCALE GENOMIC DNA]</scope>
    <source>
        <strain>ATCC MYA-4620 / CBS 123657 / FGSC 9075 / NRRL 31084 / PH-1</strain>
    </source>
</reference>
<reference key="4">
    <citation type="journal article" date="2005" name="Fungal Genet. Biol.">
        <title>Identification of a gene cluster responsible for the biosynthesis of aurofusarin in the Fusarium graminearum species complex.</title>
        <authorList>
            <person name="Malz S."/>
            <person name="Grell M.N."/>
            <person name="Thrane C."/>
            <person name="Maier F.J."/>
            <person name="Rosager P."/>
            <person name="Felk A."/>
            <person name="Albertsen K.S."/>
            <person name="Salomon S."/>
            <person name="Bohn L."/>
            <person name="Schaefer W."/>
            <person name="Giese H."/>
        </authorList>
    </citation>
    <scope>FUNCTION</scope>
</reference>
<reference key="5">
    <citation type="journal article" date="2006" name="Mol. Microbiol.">
        <title>The biosynthetic pathway for aurofusarin in Fusarium graminearum reveals a close link between the naphthoquinones and naphthopyrones.</title>
        <authorList>
            <person name="Frandsen R.J."/>
            <person name="Nielsen N.J."/>
            <person name="Maolanon N."/>
            <person name="Soerensen J.C."/>
            <person name="Olsson S."/>
            <person name="Nielsen J."/>
            <person name="Giese H."/>
        </authorList>
    </citation>
    <scope>FUNCTION</scope>
    <scope>DISRUPTION PHENOTYPE</scope>
</reference>
<reference key="6">
    <citation type="journal article" date="2006" name="Appl. Environ. Microbiol.">
        <title>GIP2, a putative transcription factor that regulates the aurofusarin biosynthetic gene cluster in Gibberella zeae.</title>
        <authorList>
            <person name="Kim J.E."/>
            <person name="Jin J."/>
            <person name="Kim H."/>
            <person name="Kim J.C."/>
            <person name="Yun S.H."/>
            <person name="Lee Y.W."/>
        </authorList>
    </citation>
    <scope>FUNCTION</scope>
    <scope>DISRUPTION PHENOTYPE</scope>
    <scope>INDUCTION</scope>
</reference>
<reference key="7">
    <citation type="journal article" date="2007" name="Biochem. Biophys. Res. Commun.">
        <title>Involvement of the osmosensor histidine kinase and osmotic stress-activated protein kinases in the regulation of secondary metabolism in Fusarium graminearum.</title>
        <authorList>
            <person name="Ochiai N."/>
            <person name="Tokai T."/>
            <person name="Nishiuchi T."/>
            <person name="Takahashi-Ando N."/>
            <person name="Fujimura M."/>
            <person name="Kimura M."/>
        </authorList>
    </citation>
    <scope>INDUCTION</scope>
</reference>
<dbReference type="EMBL" id="HG970332">
    <property type="protein sequence ID" value="CEF74597.1"/>
    <property type="molecule type" value="Genomic_DNA"/>
</dbReference>
<dbReference type="RefSeq" id="XP_011318229.1">
    <property type="nucleotide sequence ID" value="XM_011319927.1"/>
</dbReference>
<dbReference type="SMR" id="I1RF54"/>
<dbReference type="STRING" id="229533.I1RF54"/>
<dbReference type="KEGG" id="fgr:FGSG_02320"/>
<dbReference type="VEuPathDB" id="FungiDB:FGRAMPH1_01G05585"/>
<dbReference type="eggNOG" id="ENOG502SUCM">
    <property type="taxonomic scope" value="Eukaryota"/>
</dbReference>
<dbReference type="HOGENOM" id="CLU_051725_1_0_1"/>
<dbReference type="InParanoid" id="I1RF54"/>
<dbReference type="OrthoDB" id="102405at110618"/>
<dbReference type="PHI-base" id="PHI:1973"/>
<dbReference type="Proteomes" id="UP000070720">
    <property type="component" value="Chromosome 1"/>
</dbReference>
<dbReference type="GO" id="GO:0005634">
    <property type="term" value="C:nucleus"/>
    <property type="evidence" value="ECO:0007669"/>
    <property type="project" value="UniProtKB-SubCell"/>
</dbReference>
<dbReference type="GO" id="GO:0003677">
    <property type="term" value="F:DNA binding"/>
    <property type="evidence" value="ECO:0007669"/>
    <property type="project" value="UniProtKB-KW"/>
</dbReference>
<dbReference type="GO" id="GO:0000981">
    <property type="term" value="F:DNA-binding transcription factor activity, RNA polymerase II-specific"/>
    <property type="evidence" value="ECO:0007669"/>
    <property type="project" value="InterPro"/>
</dbReference>
<dbReference type="GO" id="GO:0008270">
    <property type="term" value="F:zinc ion binding"/>
    <property type="evidence" value="ECO:0007669"/>
    <property type="project" value="InterPro"/>
</dbReference>
<dbReference type="GO" id="GO:0045122">
    <property type="term" value="P:aflatoxin biosynthetic process"/>
    <property type="evidence" value="ECO:0007669"/>
    <property type="project" value="InterPro"/>
</dbReference>
<dbReference type="CDD" id="cd00067">
    <property type="entry name" value="GAL4"/>
    <property type="match status" value="1"/>
</dbReference>
<dbReference type="Gene3D" id="4.10.240.10">
    <property type="entry name" value="Zn(2)-C6 fungal-type DNA-binding domain"/>
    <property type="match status" value="1"/>
</dbReference>
<dbReference type="InterPro" id="IPR013700">
    <property type="entry name" value="AflR"/>
</dbReference>
<dbReference type="InterPro" id="IPR036864">
    <property type="entry name" value="Zn2-C6_fun-type_DNA-bd_sf"/>
</dbReference>
<dbReference type="InterPro" id="IPR001138">
    <property type="entry name" value="Zn2Cys6_DnaBD"/>
</dbReference>
<dbReference type="Pfam" id="PF08493">
    <property type="entry name" value="AflR"/>
    <property type="match status" value="1"/>
</dbReference>
<dbReference type="Pfam" id="PF00172">
    <property type="entry name" value="Zn_clus"/>
    <property type="match status" value="1"/>
</dbReference>
<dbReference type="PRINTS" id="PR00755">
    <property type="entry name" value="AFLATOXINBRP"/>
</dbReference>
<dbReference type="SMART" id="SM00066">
    <property type="entry name" value="GAL4"/>
    <property type="match status" value="1"/>
</dbReference>
<dbReference type="SUPFAM" id="SSF57701">
    <property type="entry name" value="Zn2/Cys6 DNA-binding domain"/>
    <property type="match status" value="1"/>
</dbReference>
<dbReference type="PROSITE" id="PS00463">
    <property type="entry name" value="ZN2_CY6_FUNGAL_1"/>
    <property type="match status" value="1"/>
</dbReference>
<dbReference type="PROSITE" id="PS50048">
    <property type="entry name" value="ZN2_CY6_FUNGAL_2"/>
    <property type="match status" value="1"/>
</dbReference>
<comment type="function">
    <text evidence="3 4 5">Transcription factor that specifically regulates the expression of the gene cluster that mediates the biosynthesis of aurofusarin, a red mycelium pigment which is acting as a mycotoxin (PubMed:15809006, PubMed:16461721, PubMed:16879655).</text>
</comment>
<comment type="subcellular location">
    <subcellularLocation>
        <location evidence="1">Nucleus</location>
    </subcellularLocation>
</comment>
<comment type="induction">
    <text evidence="4 6">Expression correlates with aurofusarin production and is restricted to vegetative mycelia (PubMed:16461721). Expression is negatively regulated by the MAPK-mediated osmotic stress-signaling pathway (PubMed:17897620).</text>
</comment>
<comment type="disruption phenotype">
    <text evidence="4 5">Leads to an albinos phenotype (PubMed:16879655). Inactivates the expression of the aurofusarin biosynthetic gene cluster (PubMed:16461721, PubMed:16879655).</text>
</comment>
<organism>
    <name type="scientific">Gibberella zeae (strain ATCC MYA-4620 / CBS 123657 / FGSC 9075 / NRRL 31084 / PH-1)</name>
    <name type="common">Wheat head blight fungus</name>
    <name type="synonym">Fusarium graminearum</name>
    <dbReference type="NCBI Taxonomy" id="229533"/>
    <lineage>
        <taxon>Eukaryota</taxon>
        <taxon>Fungi</taxon>
        <taxon>Dikarya</taxon>
        <taxon>Ascomycota</taxon>
        <taxon>Pezizomycotina</taxon>
        <taxon>Sordariomycetes</taxon>
        <taxon>Hypocreomycetidae</taxon>
        <taxon>Hypocreales</taxon>
        <taxon>Nectriaceae</taxon>
        <taxon>Fusarium</taxon>
    </lineage>
</organism>
<proteinExistence type="evidence at transcript level"/>
<name>AURR1_GIBZE</name>
<protein>
    <recommendedName>
        <fullName evidence="8">Aurofusarin biosynthesis regulatory protein aurR1</fullName>
    </recommendedName>
    <alternativeName>
        <fullName evidence="8">Aurofusarin biosynthesis cluster protein R1</fullName>
    </alternativeName>
    <alternativeName>
        <fullName evidence="7">Gibberella pigment protein 2</fullName>
    </alternativeName>
</protein>
<accession>I1RF54</accession>
<keyword id="KW-0238">DNA-binding</keyword>
<keyword id="KW-0479">Metal-binding</keyword>
<keyword id="KW-0539">Nucleus</keyword>
<keyword id="KW-1185">Reference proteome</keyword>
<keyword id="KW-0804">Transcription</keyword>
<keyword id="KW-0805">Transcription regulation</keyword>
<keyword id="KW-0862">Zinc</keyword>
<sequence>MSSTDPLLRRVENYRESCDNCAKSKVRCGKEQPWCQRCERRGQVCSYSPSQRSRKRTLDAAHPESDQRNGTPPFTAISSASSVAAVSTGFSSMLSQADSWGTCPDLVELLTSGSSSESLTPDNNHLVWLSDMESIAGDSNISKSMERMDVFPYPKSIASSAAGVVNGSGAGADSMGRRSTCPLQNKQHCEADLISALAKPELPSLSCWGNPKASQNLGTILTASRATLKCVTTAMSCTCTPNDNVALLATAVLLRILSWYHIVLKNCNGPNDTSAATIDDHTSPTPSNDGKDTERSVSRDTNVSQDGSEPSSLIMPPMTIGAYELDSENRERMIGHIMLSELGKMGNLLSDFSKKFCDPQSTMLGNDNRSQLFLALEMLIRNKHMATVLDVRKKLEVK</sequence>
<evidence type="ECO:0000255" key="1">
    <source>
        <dbReference type="PROSITE-ProRule" id="PRU00227"/>
    </source>
</evidence>
<evidence type="ECO:0000256" key="2">
    <source>
        <dbReference type="SAM" id="MobiDB-lite"/>
    </source>
</evidence>
<evidence type="ECO:0000269" key="3">
    <source>
    </source>
</evidence>
<evidence type="ECO:0000269" key="4">
    <source>
    </source>
</evidence>
<evidence type="ECO:0000269" key="5">
    <source>
    </source>
</evidence>
<evidence type="ECO:0000269" key="6">
    <source>
    </source>
</evidence>
<evidence type="ECO:0000303" key="7">
    <source>
    </source>
</evidence>
<evidence type="ECO:0000303" key="8">
    <source>
    </source>
</evidence>